<protein>
    <recommendedName>
        <fullName evidence="1">L-arabinose isomerase</fullName>
        <ecNumber evidence="1">5.3.1.4</ecNumber>
    </recommendedName>
</protein>
<feature type="chain" id="PRO_0000259347" description="L-arabinose isomerase">
    <location>
        <begin position="1"/>
        <end position="500"/>
    </location>
</feature>
<feature type="binding site" evidence="1">
    <location>
        <position position="306"/>
    </location>
    <ligand>
        <name>Mn(2+)</name>
        <dbReference type="ChEBI" id="CHEBI:29035"/>
    </ligand>
</feature>
<feature type="binding site" evidence="1">
    <location>
        <position position="333"/>
    </location>
    <ligand>
        <name>Mn(2+)</name>
        <dbReference type="ChEBI" id="CHEBI:29035"/>
    </ligand>
</feature>
<feature type="binding site" evidence="1">
    <location>
        <position position="350"/>
    </location>
    <ligand>
        <name>Mn(2+)</name>
        <dbReference type="ChEBI" id="CHEBI:29035"/>
    </ligand>
</feature>
<feature type="binding site" evidence="1">
    <location>
        <position position="450"/>
    </location>
    <ligand>
        <name>Mn(2+)</name>
        <dbReference type="ChEBI" id="CHEBI:29035"/>
    </ligand>
</feature>
<proteinExistence type="inferred from homology"/>
<comment type="function">
    <text evidence="1">Catalyzes the conversion of L-arabinose to L-ribulose.</text>
</comment>
<comment type="catalytic activity">
    <reaction evidence="1">
        <text>beta-L-arabinopyranose = L-ribulose</text>
        <dbReference type="Rhea" id="RHEA:14821"/>
        <dbReference type="ChEBI" id="CHEBI:16880"/>
        <dbReference type="ChEBI" id="CHEBI:40886"/>
        <dbReference type="EC" id="5.3.1.4"/>
    </reaction>
</comment>
<comment type="cofactor">
    <cofactor evidence="1">
        <name>Mn(2+)</name>
        <dbReference type="ChEBI" id="CHEBI:29035"/>
    </cofactor>
    <text evidence="1">Binds 1 Mn(2+) ion per subunit.</text>
</comment>
<comment type="pathway">
    <text evidence="1">Carbohydrate degradation; L-arabinose degradation via L-ribulose; D-xylulose 5-phosphate from L-arabinose (bacterial route): step 1/3.</text>
</comment>
<comment type="subunit">
    <text evidence="1">Homohexamer.</text>
</comment>
<comment type="similarity">
    <text evidence="1">Belongs to the arabinose isomerase family.</text>
</comment>
<dbReference type="EC" id="5.3.1.4" evidence="1"/>
<dbReference type="EMBL" id="CP000308">
    <property type="protein sequence ID" value="ABG13579.1"/>
    <property type="molecule type" value="Genomic_DNA"/>
</dbReference>
<dbReference type="RefSeq" id="WP_002210591.1">
    <property type="nucleotide sequence ID" value="NZ_CP009906.1"/>
</dbReference>
<dbReference type="SMR" id="Q1C7J3"/>
<dbReference type="GeneID" id="57976417"/>
<dbReference type="KEGG" id="ypa:YPA_1613"/>
<dbReference type="UniPathway" id="UPA00145">
    <property type="reaction ID" value="UER00565"/>
</dbReference>
<dbReference type="Proteomes" id="UP000001971">
    <property type="component" value="Chromosome"/>
</dbReference>
<dbReference type="GO" id="GO:0005829">
    <property type="term" value="C:cytosol"/>
    <property type="evidence" value="ECO:0007669"/>
    <property type="project" value="TreeGrafter"/>
</dbReference>
<dbReference type="GO" id="GO:0008733">
    <property type="term" value="F:L-arabinose isomerase activity"/>
    <property type="evidence" value="ECO:0007669"/>
    <property type="project" value="UniProtKB-UniRule"/>
</dbReference>
<dbReference type="GO" id="GO:0030145">
    <property type="term" value="F:manganese ion binding"/>
    <property type="evidence" value="ECO:0007669"/>
    <property type="project" value="UniProtKB-UniRule"/>
</dbReference>
<dbReference type="GO" id="GO:0019569">
    <property type="term" value="P:L-arabinose catabolic process to xylulose 5-phosphate"/>
    <property type="evidence" value="ECO:0007669"/>
    <property type="project" value="UniProtKB-UniRule"/>
</dbReference>
<dbReference type="CDD" id="cd03557">
    <property type="entry name" value="L-arabinose_isomerase"/>
    <property type="match status" value="1"/>
</dbReference>
<dbReference type="FunFam" id="3.40.50.10940:FF:000001">
    <property type="entry name" value="L-arabinose isomerase"/>
    <property type="match status" value="1"/>
</dbReference>
<dbReference type="Gene3D" id="3.40.50.10940">
    <property type="match status" value="1"/>
</dbReference>
<dbReference type="HAMAP" id="MF_00519">
    <property type="entry name" value="Arabinose_Isome"/>
    <property type="match status" value="1"/>
</dbReference>
<dbReference type="InterPro" id="IPR024664">
    <property type="entry name" value="Ara_Isoase_C"/>
</dbReference>
<dbReference type="InterPro" id="IPR055390">
    <property type="entry name" value="AraA_central"/>
</dbReference>
<dbReference type="InterPro" id="IPR055389">
    <property type="entry name" value="AraA_N"/>
</dbReference>
<dbReference type="InterPro" id="IPR038583">
    <property type="entry name" value="AraA_N_sf"/>
</dbReference>
<dbReference type="InterPro" id="IPR004216">
    <property type="entry name" value="Fuc/Ara_isomerase_C"/>
</dbReference>
<dbReference type="InterPro" id="IPR009015">
    <property type="entry name" value="Fucose_isomerase_N/cen_sf"/>
</dbReference>
<dbReference type="InterPro" id="IPR003762">
    <property type="entry name" value="Lara_isomerase"/>
</dbReference>
<dbReference type="NCBIfam" id="NF002795">
    <property type="entry name" value="PRK02929.1"/>
    <property type="match status" value="1"/>
</dbReference>
<dbReference type="PANTHER" id="PTHR38464">
    <property type="entry name" value="L-ARABINOSE ISOMERASE"/>
    <property type="match status" value="1"/>
</dbReference>
<dbReference type="PANTHER" id="PTHR38464:SF1">
    <property type="entry name" value="L-ARABINOSE ISOMERASE"/>
    <property type="match status" value="1"/>
</dbReference>
<dbReference type="Pfam" id="PF24856">
    <property type="entry name" value="AraA_central"/>
    <property type="match status" value="1"/>
</dbReference>
<dbReference type="Pfam" id="PF02610">
    <property type="entry name" value="AraA_N"/>
    <property type="match status" value="1"/>
</dbReference>
<dbReference type="Pfam" id="PF11762">
    <property type="entry name" value="Arabinose_Iso_C"/>
    <property type="match status" value="1"/>
</dbReference>
<dbReference type="PIRSF" id="PIRSF001478">
    <property type="entry name" value="L-ara_isomerase"/>
    <property type="match status" value="1"/>
</dbReference>
<dbReference type="SUPFAM" id="SSF50443">
    <property type="entry name" value="FucI/AraA C-terminal domain-like"/>
    <property type="match status" value="1"/>
</dbReference>
<dbReference type="SUPFAM" id="SSF53743">
    <property type="entry name" value="FucI/AraA N-terminal and middle domains"/>
    <property type="match status" value="1"/>
</dbReference>
<accession>Q1C7J3</accession>
<sequence length="500" mass="55599">MDVFKQSEVWFVIGSQNLYGPKTLQQVMDNAHQVVNSLNNEAGLPVKLVLKPLVTTPDEITALCREANYDTACIGIMTWLHTFSPAKMWIGGLSILNKPLLQFHTQFNAQIPWKTMDMDFMNLNQTAHGGREFGFIGARMRQQHSVITGHWQDKEAHQRIGQWMRVAAAKQESQQLKVARFGDNMREVAVTEGDKVAAQIQFGYSVNAYGIGDLVAVVDAVSKGDIDTLVEEYEATYRFTDAVKLNGDKRENLLDAARIELGMTRFLEQGGFKAFTTNFENLYGLKQLPGLAVQRLMQQGYGFGGEGDWKTAALLRILKVMGTGLKGGTSFMEDYTYNFQPGNDLVVGSHMLEVCPSIAKEEKPLLDVQHLGIGGKADPARLIFSTPAGPALNASLIDMGNRFRLLVNVVDTVEQPHPLPKLPVARAIWQAQPSLATAAEAWIIAGGAHHTVFSQAVGVDELRLYAEMHGIEFLLIDNDTTLPAFKNEIRWNEVYYQLNR</sequence>
<organism>
    <name type="scientific">Yersinia pestis bv. Antiqua (strain Antiqua)</name>
    <dbReference type="NCBI Taxonomy" id="360102"/>
    <lineage>
        <taxon>Bacteria</taxon>
        <taxon>Pseudomonadati</taxon>
        <taxon>Pseudomonadota</taxon>
        <taxon>Gammaproteobacteria</taxon>
        <taxon>Enterobacterales</taxon>
        <taxon>Yersiniaceae</taxon>
        <taxon>Yersinia</taxon>
    </lineage>
</organism>
<reference key="1">
    <citation type="journal article" date="2006" name="J. Bacteriol.">
        <title>Complete genome sequence of Yersinia pestis strains Antiqua and Nepal516: evidence of gene reduction in an emerging pathogen.</title>
        <authorList>
            <person name="Chain P.S.G."/>
            <person name="Hu P."/>
            <person name="Malfatti S.A."/>
            <person name="Radnedge L."/>
            <person name="Larimer F."/>
            <person name="Vergez L.M."/>
            <person name="Worsham P."/>
            <person name="Chu M.C."/>
            <person name="Andersen G.L."/>
        </authorList>
    </citation>
    <scope>NUCLEOTIDE SEQUENCE [LARGE SCALE GENOMIC DNA]</scope>
    <source>
        <strain>Antiqua</strain>
    </source>
</reference>
<name>ARAA_YERPA</name>
<gene>
    <name evidence="1" type="primary">araA</name>
    <name type="ordered locus">YPA_1613</name>
</gene>
<keyword id="KW-0054">Arabinose catabolism</keyword>
<keyword id="KW-0119">Carbohydrate metabolism</keyword>
<keyword id="KW-0413">Isomerase</keyword>
<keyword id="KW-0464">Manganese</keyword>
<keyword id="KW-0479">Metal-binding</keyword>
<evidence type="ECO:0000255" key="1">
    <source>
        <dbReference type="HAMAP-Rule" id="MF_00519"/>
    </source>
</evidence>